<dbReference type="EC" id="3.1.26.4" evidence="1"/>
<dbReference type="EMBL" id="CP000744">
    <property type="protein sequence ID" value="ABR80658.1"/>
    <property type="molecule type" value="Genomic_DNA"/>
</dbReference>
<dbReference type="RefSeq" id="WP_003153754.1">
    <property type="nucleotide sequence ID" value="NC_009656.1"/>
</dbReference>
<dbReference type="SMR" id="A6V1E6"/>
<dbReference type="GeneID" id="77219877"/>
<dbReference type="KEGG" id="pap:PSPA7_1497"/>
<dbReference type="HOGENOM" id="CLU_036532_3_2_6"/>
<dbReference type="Proteomes" id="UP000001582">
    <property type="component" value="Chromosome"/>
</dbReference>
<dbReference type="GO" id="GO:0005737">
    <property type="term" value="C:cytoplasm"/>
    <property type="evidence" value="ECO:0007669"/>
    <property type="project" value="UniProtKB-SubCell"/>
</dbReference>
<dbReference type="GO" id="GO:0032299">
    <property type="term" value="C:ribonuclease H2 complex"/>
    <property type="evidence" value="ECO:0007669"/>
    <property type="project" value="TreeGrafter"/>
</dbReference>
<dbReference type="GO" id="GO:0030145">
    <property type="term" value="F:manganese ion binding"/>
    <property type="evidence" value="ECO:0007669"/>
    <property type="project" value="UniProtKB-UniRule"/>
</dbReference>
<dbReference type="GO" id="GO:0003723">
    <property type="term" value="F:RNA binding"/>
    <property type="evidence" value="ECO:0007669"/>
    <property type="project" value="InterPro"/>
</dbReference>
<dbReference type="GO" id="GO:0004523">
    <property type="term" value="F:RNA-DNA hybrid ribonuclease activity"/>
    <property type="evidence" value="ECO:0007669"/>
    <property type="project" value="UniProtKB-UniRule"/>
</dbReference>
<dbReference type="GO" id="GO:0043137">
    <property type="term" value="P:DNA replication, removal of RNA primer"/>
    <property type="evidence" value="ECO:0007669"/>
    <property type="project" value="TreeGrafter"/>
</dbReference>
<dbReference type="GO" id="GO:0006298">
    <property type="term" value="P:mismatch repair"/>
    <property type="evidence" value="ECO:0007669"/>
    <property type="project" value="TreeGrafter"/>
</dbReference>
<dbReference type="CDD" id="cd07182">
    <property type="entry name" value="RNase_HII_bacteria_HII_like"/>
    <property type="match status" value="1"/>
</dbReference>
<dbReference type="FunFam" id="3.30.420.10:FF:000006">
    <property type="entry name" value="Ribonuclease HII"/>
    <property type="match status" value="1"/>
</dbReference>
<dbReference type="Gene3D" id="3.30.420.10">
    <property type="entry name" value="Ribonuclease H-like superfamily/Ribonuclease H"/>
    <property type="match status" value="1"/>
</dbReference>
<dbReference type="HAMAP" id="MF_00052_B">
    <property type="entry name" value="RNase_HII_B"/>
    <property type="match status" value="1"/>
</dbReference>
<dbReference type="InterPro" id="IPR022898">
    <property type="entry name" value="RNase_HII"/>
</dbReference>
<dbReference type="InterPro" id="IPR001352">
    <property type="entry name" value="RNase_HII/HIII"/>
</dbReference>
<dbReference type="InterPro" id="IPR024567">
    <property type="entry name" value="RNase_HII/HIII_dom"/>
</dbReference>
<dbReference type="InterPro" id="IPR012337">
    <property type="entry name" value="RNaseH-like_sf"/>
</dbReference>
<dbReference type="InterPro" id="IPR036397">
    <property type="entry name" value="RNaseH_sf"/>
</dbReference>
<dbReference type="NCBIfam" id="NF000594">
    <property type="entry name" value="PRK00015.1-1"/>
    <property type="match status" value="1"/>
</dbReference>
<dbReference type="NCBIfam" id="NF000595">
    <property type="entry name" value="PRK00015.1-3"/>
    <property type="match status" value="1"/>
</dbReference>
<dbReference type="NCBIfam" id="NF000596">
    <property type="entry name" value="PRK00015.1-4"/>
    <property type="match status" value="1"/>
</dbReference>
<dbReference type="PANTHER" id="PTHR10954">
    <property type="entry name" value="RIBONUCLEASE H2 SUBUNIT A"/>
    <property type="match status" value="1"/>
</dbReference>
<dbReference type="PANTHER" id="PTHR10954:SF18">
    <property type="entry name" value="RIBONUCLEASE HII"/>
    <property type="match status" value="1"/>
</dbReference>
<dbReference type="Pfam" id="PF01351">
    <property type="entry name" value="RNase_HII"/>
    <property type="match status" value="1"/>
</dbReference>
<dbReference type="SUPFAM" id="SSF53098">
    <property type="entry name" value="Ribonuclease H-like"/>
    <property type="match status" value="1"/>
</dbReference>
<dbReference type="PROSITE" id="PS51975">
    <property type="entry name" value="RNASE_H_2"/>
    <property type="match status" value="1"/>
</dbReference>
<reference key="1">
    <citation type="submission" date="2007-06" db="EMBL/GenBank/DDBJ databases">
        <authorList>
            <person name="Dodson R.J."/>
            <person name="Harkins D."/>
            <person name="Paulsen I.T."/>
        </authorList>
    </citation>
    <scope>NUCLEOTIDE SEQUENCE [LARGE SCALE GENOMIC DNA]</scope>
    <source>
        <strain>DSM 24068 / PA7</strain>
    </source>
</reference>
<keyword id="KW-0963">Cytoplasm</keyword>
<keyword id="KW-0255">Endonuclease</keyword>
<keyword id="KW-0378">Hydrolase</keyword>
<keyword id="KW-0464">Manganese</keyword>
<keyword id="KW-0479">Metal-binding</keyword>
<keyword id="KW-0540">Nuclease</keyword>
<protein>
    <recommendedName>
        <fullName evidence="1">Ribonuclease HII</fullName>
        <shortName evidence="1">RNase HII</shortName>
        <ecNumber evidence="1">3.1.26.4</ecNumber>
    </recommendedName>
</protein>
<proteinExistence type="inferred from homology"/>
<sequence length="201" mass="21744">MQLGLDFNLVEDLVAGVDEVGRGPLCGPVVTAAVILDPSRPILGLNDSKKLSEARREALFEEIREKALAWCVARAEVEEIDRLNILHATMLAMQRAVEGLSVTPRLALIDGNRCPRLAVPSAPVVKGDSQVPAIAAASILAKVSRDREMVELDRLYPGYGMAGHKGYPTAVHLEALSRLGPTPIHRRSFAPVRELLDASVE</sequence>
<comment type="function">
    <text evidence="1">Endonuclease that specifically degrades the RNA of RNA-DNA hybrids.</text>
</comment>
<comment type="catalytic activity">
    <reaction evidence="1">
        <text>Endonucleolytic cleavage to 5'-phosphomonoester.</text>
        <dbReference type="EC" id="3.1.26.4"/>
    </reaction>
</comment>
<comment type="cofactor">
    <cofactor evidence="1">
        <name>Mn(2+)</name>
        <dbReference type="ChEBI" id="CHEBI:29035"/>
    </cofactor>
    <cofactor evidence="1">
        <name>Mg(2+)</name>
        <dbReference type="ChEBI" id="CHEBI:18420"/>
    </cofactor>
    <text evidence="1">Manganese or magnesium. Binds 1 divalent metal ion per monomer in the absence of substrate. May bind a second metal ion after substrate binding.</text>
</comment>
<comment type="subcellular location">
    <subcellularLocation>
        <location evidence="1">Cytoplasm</location>
    </subcellularLocation>
</comment>
<comment type="similarity">
    <text evidence="1">Belongs to the RNase HII family.</text>
</comment>
<accession>A6V1E6</accession>
<name>RNH2_PSEP7</name>
<evidence type="ECO:0000255" key="1">
    <source>
        <dbReference type="HAMAP-Rule" id="MF_00052"/>
    </source>
</evidence>
<evidence type="ECO:0000255" key="2">
    <source>
        <dbReference type="PROSITE-ProRule" id="PRU01319"/>
    </source>
</evidence>
<feature type="chain" id="PRO_1000031179" description="Ribonuclease HII">
    <location>
        <begin position="1"/>
        <end position="201"/>
    </location>
</feature>
<feature type="domain" description="RNase H type-2" evidence="2">
    <location>
        <begin position="12"/>
        <end position="201"/>
    </location>
</feature>
<feature type="binding site" evidence="1">
    <location>
        <position position="18"/>
    </location>
    <ligand>
        <name>a divalent metal cation</name>
        <dbReference type="ChEBI" id="CHEBI:60240"/>
    </ligand>
</feature>
<feature type="binding site" evidence="1">
    <location>
        <position position="19"/>
    </location>
    <ligand>
        <name>a divalent metal cation</name>
        <dbReference type="ChEBI" id="CHEBI:60240"/>
    </ligand>
</feature>
<feature type="binding site" evidence="1">
    <location>
        <position position="110"/>
    </location>
    <ligand>
        <name>a divalent metal cation</name>
        <dbReference type="ChEBI" id="CHEBI:60240"/>
    </ligand>
</feature>
<gene>
    <name evidence="1" type="primary">rnhB</name>
    <name type="ordered locus">PSPA7_1497</name>
</gene>
<organism>
    <name type="scientific">Pseudomonas paraeruginosa (strain DSM 24068 / PA7)</name>
    <name type="common">Pseudomonas aeruginosa (strain PA7)</name>
    <dbReference type="NCBI Taxonomy" id="381754"/>
    <lineage>
        <taxon>Bacteria</taxon>
        <taxon>Pseudomonadati</taxon>
        <taxon>Pseudomonadota</taxon>
        <taxon>Gammaproteobacteria</taxon>
        <taxon>Pseudomonadales</taxon>
        <taxon>Pseudomonadaceae</taxon>
        <taxon>Pseudomonas</taxon>
        <taxon>Pseudomonas paraeruginosa</taxon>
    </lineage>
</organism>